<evidence type="ECO:0000255" key="1">
    <source>
        <dbReference type="HAMAP-Rule" id="MF_00075"/>
    </source>
</evidence>
<evidence type="ECO:0000256" key="2">
    <source>
        <dbReference type="SAM" id="MobiDB-lite"/>
    </source>
</evidence>
<keyword id="KW-0963">Cytoplasm</keyword>
<keyword id="KW-0396">Initiation factor</keyword>
<keyword id="KW-0648">Protein biosynthesis</keyword>
<keyword id="KW-1185">Reference proteome</keyword>
<keyword id="KW-0694">RNA-binding</keyword>
<keyword id="KW-0699">rRNA-binding</keyword>
<organism>
    <name type="scientific">Nitrobacter hamburgensis (strain DSM 10229 / NCIMB 13809 / X14)</name>
    <dbReference type="NCBI Taxonomy" id="323097"/>
    <lineage>
        <taxon>Bacteria</taxon>
        <taxon>Pseudomonadati</taxon>
        <taxon>Pseudomonadota</taxon>
        <taxon>Alphaproteobacteria</taxon>
        <taxon>Hyphomicrobiales</taxon>
        <taxon>Nitrobacteraceae</taxon>
        <taxon>Nitrobacter</taxon>
    </lineage>
</organism>
<feature type="chain" id="PRO_0000263827" description="Translation initiation factor IF-1">
    <location>
        <begin position="1"/>
        <end position="93"/>
    </location>
</feature>
<feature type="domain" description="S1-like" evidence="1">
    <location>
        <begin position="1"/>
        <end position="72"/>
    </location>
</feature>
<feature type="region of interest" description="Disordered" evidence="2">
    <location>
        <begin position="69"/>
        <end position="93"/>
    </location>
</feature>
<proteinExistence type="inferred from homology"/>
<comment type="function">
    <text evidence="1">One of the essential components for the initiation of protein synthesis. Stabilizes the binding of IF-2 and IF-3 on the 30S subunit to which N-formylmethionyl-tRNA(fMet) subsequently binds. Helps modulate mRNA selection, yielding the 30S pre-initiation complex (PIC). Upon addition of the 50S ribosomal subunit IF-1, IF-2 and IF-3 are released leaving the mature 70S translation initiation complex.</text>
</comment>
<comment type="subunit">
    <text evidence="1">Component of the 30S ribosomal translation pre-initiation complex which assembles on the 30S ribosome in the order IF-2 and IF-3, IF-1 and N-formylmethionyl-tRNA(fMet); mRNA recruitment can occur at any time during PIC assembly.</text>
</comment>
<comment type="subcellular location">
    <subcellularLocation>
        <location evidence="1">Cytoplasm</location>
    </subcellularLocation>
</comment>
<comment type="similarity">
    <text evidence="1">Belongs to the IF-1 family.</text>
</comment>
<dbReference type="EMBL" id="CP000319">
    <property type="protein sequence ID" value="ABE61290.1"/>
    <property type="molecule type" value="Genomic_DNA"/>
</dbReference>
<dbReference type="RefSeq" id="WP_011508994.1">
    <property type="nucleotide sequence ID" value="NC_007964.1"/>
</dbReference>
<dbReference type="SMR" id="Q1QR57"/>
<dbReference type="STRING" id="323097.Nham_0399"/>
<dbReference type="KEGG" id="nha:Nham_0399"/>
<dbReference type="eggNOG" id="COG0361">
    <property type="taxonomic scope" value="Bacteria"/>
</dbReference>
<dbReference type="HOGENOM" id="CLU_151267_4_1_5"/>
<dbReference type="OrthoDB" id="9803250at2"/>
<dbReference type="Proteomes" id="UP000001953">
    <property type="component" value="Chromosome"/>
</dbReference>
<dbReference type="GO" id="GO:0005829">
    <property type="term" value="C:cytosol"/>
    <property type="evidence" value="ECO:0007669"/>
    <property type="project" value="TreeGrafter"/>
</dbReference>
<dbReference type="GO" id="GO:0043022">
    <property type="term" value="F:ribosome binding"/>
    <property type="evidence" value="ECO:0007669"/>
    <property type="project" value="UniProtKB-UniRule"/>
</dbReference>
<dbReference type="GO" id="GO:0019843">
    <property type="term" value="F:rRNA binding"/>
    <property type="evidence" value="ECO:0007669"/>
    <property type="project" value="UniProtKB-UniRule"/>
</dbReference>
<dbReference type="GO" id="GO:0003743">
    <property type="term" value="F:translation initiation factor activity"/>
    <property type="evidence" value="ECO:0007669"/>
    <property type="project" value="UniProtKB-UniRule"/>
</dbReference>
<dbReference type="CDD" id="cd04451">
    <property type="entry name" value="S1_IF1"/>
    <property type="match status" value="1"/>
</dbReference>
<dbReference type="FunFam" id="2.40.50.140:FF:000002">
    <property type="entry name" value="Translation initiation factor IF-1"/>
    <property type="match status" value="1"/>
</dbReference>
<dbReference type="Gene3D" id="2.40.50.140">
    <property type="entry name" value="Nucleic acid-binding proteins"/>
    <property type="match status" value="1"/>
</dbReference>
<dbReference type="HAMAP" id="MF_00075">
    <property type="entry name" value="IF_1"/>
    <property type="match status" value="1"/>
</dbReference>
<dbReference type="InterPro" id="IPR012340">
    <property type="entry name" value="NA-bd_OB-fold"/>
</dbReference>
<dbReference type="InterPro" id="IPR006196">
    <property type="entry name" value="RNA-binding_domain_S1_IF1"/>
</dbReference>
<dbReference type="InterPro" id="IPR004368">
    <property type="entry name" value="TIF_IF1"/>
</dbReference>
<dbReference type="NCBIfam" id="TIGR00008">
    <property type="entry name" value="infA"/>
    <property type="match status" value="1"/>
</dbReference>
<dbReference type="PANTHER" id="PTHR33370">
    <property type="entry name" value="TRANSLATION INITIATION FACTOR IF-1, CHLOROPLASTIC"/>
    <property type="match status" value="1"/>
</dbReference>
<dbReference type="PANTHER" id="PTHR33370:SF1">
    <property type="entry name" value="TRANSLATION INITIATION FACTOR IF-1, CHLOROPLASTIC"/>
    <property type="match status" value="1"/>
</dbReference>
<dbReference type="Pfam" id="PF01176">
    <property type="entry name" value="eIF-1a"/>
    <property type="match status" value="1"/>
</dbReference>
<dbReference type="SUPFAM" id="SSF50249">
    <property type="entry name" value="Nucleic acid-binding proteins"/>
    <property type="match status" value="1"/>
</dbReference>
<dbReference type="PROSITE" id="PS50832">
    <property type="entry name" value="S1_IF1_TYPE"/>
    <property type="match status" value="1"/>
</dbReference>
<name>IF1_NITHX</name>
<protein>
    <recommendedName>
        <fullName evidence="1">Translation initiation factor IF-1</fullName>
    </recommendedName>
</protein>
<reference key="1">
    <citation type="submission" date="2006-03" db="EMBL/GenBank/DDBJ databases">
        <title>Complete sequence of chromosome of Nitrobacter hamburgensis X14.</title>
        <authorList>
            <consortium name="US DOE Joint Genome Institute"/>
            <person name="Copeland A."/>
            <person name="Lucas S."/>
            <person name="Lapidus A."/>
            <person name="Barry K."/>
            <person name="Detter J.C."/>
            <person name="Glavina del Rio T."/>
            <person name="Hammon N."/>
            <person name="Israni S."/>
            <person name="Dalin E."/>
            <person name="Tice H."/>
            <person name="Pitluck S."/>
            <person name="Chain P."/>
            <person name="Malfatti S."/>
            <person name="Shin M."/>
            <person name="Vergez L."/>
            <person name="Schmutz J."/>
            <person name="Larimer F."/>
            <person name="Land M."/>
            <person name="Hauser L."/>
            <person name="Kyrpides N."/>
            <person name="Ivanova N."/>
            <person name="Ward B."/>
            <person name="Arp D."/>
            <person name="Klotz M."/>
            <person name="Stein L."/>
            <person name="O'Mullan G."/>
            <person name="Starkenburg S."/>
            <person name="Sayavedra L."/>
            <person name="Poret-Peterson A.T."/>
            <person name="Gentry M.E."/>
            <person name="Bruce D."/>
            <person name="Richardson P."/>
        </authorList>
    </citation>
    <scope>NUCLEOTIDE SEQUENCE [LARGE SCALE GENOMIC DNA]</scope>
    <source>
        <strain>DSM 10229 / NCIMB 13809 / X14</strain>
    </source>
</reference>
<accession>Q1QR57</accession>
<gene>
    <name evidence="1" type="primary">infA</name>
    <name type="ordered locus">Nham_0399</name>
</gene>
<sequence>MAKEELIQFEGLVTEILPDARYRVQLDAGHEIVAYTAGKMKKNRIKTLAGDRVTIEMSPYDLEKGRLIFRHKDERPSGAPRGGPPRGGQFRRR</sequence>